<comment type="function">
    <text evidence="1">Produces ATP from ADP in the presence of a proton gradient across the membrane. The gamma chain is believed to be important in regulating ATPase activity and the flow of protons through the CF(0) complex.</text>
</comment>
<comment type="subunit">
    <text evidence="1">F-type ATPases have 2 components, CF(1) - the catalytic core - and CF(0) - the membrane proton channel. CF(1) has five subunits: alpha(3), beta(3), gamma(1), delta(1), epsilon(1). CF(0) has three main subunits: a, b and c.</text>
</comment>
<comment type="subcellular location">
    <subcellularLocation>
        <location evidence="1">Cell membrane</location>
        <topology evidence="1">Peripheral membrane protein</topology>
    </subcellularLocation>
</comment>
<comment type="similarity">
    <text evidence="1">Belongs to the ATPase gamma chain family.</text>
</comment>
<accession>P9WPU9</accession>
<accession>L0T696</accession>
<accession>P63671</accession>
<accession>Q10597</accession>
<name>ATPG_MYCTU</name>
<feature type="chain" id="PRO_0000073318" description="ATP synthase gamma chain">
    <location>
        <begin position="1"/>
        <end position="305"/>
    </location>
</feature>
<feature type="helix" evidence="2">
    <location>
        <begin position="4"/>
        <end position="58"/>
    </location>
</feature>
<feature type="helix" evidence="2">
    <location>
        <begin position="66"/>
        <end position="68"/>
    </location>
</feature>
<feature type="strand" evidence="2">
    <location>
        <begin position="76"/>
        <end position="82"/>
    </location>
</feature>
<feature type="strand" evidence="2">
    <location>
        <begin position="89"/>
        <end position="91"/>
    </location>
</feature>
<feature type="helix" evidence="2">
    <location>
        <begin position="92"/>
        <end position="107"/>
    </location>
</feature>
<feature type="turn" evidence="2">
    <location>
        <begin position="108"/>
        <end position="111"/>
    </location>
</feature>
<feature type="strand" evidence="2">
    <location>
        <begin position="113"/>
        <end position="120"/>
    </location>
</feature>
<feature type="helix" evidence="2">
    <location>
        <begin position="121"/>
        <end position="129"/>
    </location>
</feature>
<feature type="strand" evidence="2">
    <location>
        <begin position="134"/>
        <end position="138"/>
    </location>
</feature>
<feature type="strand" evidence="2">
    <location>
        <begin position="142"/>
        <end position="144"/>
    </location>
</feature>
<feature type="helix" evidence="2">
    <location>
        <begin position="147"/>
        <end position="162"/>
    </location>
</feature>
<feature type="strand" evidence="2">
    <location>
        <begin position="180"/>
        <end position="190"/>
    </location>
</feature>
<feature type="turn" evidence="2">
    <location>
        <begin position="191"/>
        <end position="193"/>
    </location>
</feature>
<feature type="strand" evidence="2">
    <location>
        <begin position="194"/>
        <end position="209"/>
    </location>
</feature>
<feature type="strand" evidence="2">
    <location>
        <begin position="221"/>
        <end position="224"/>
    </location>
</feature>
<feature type="helix" evidence="2">
    <location>
        <begin position="226"/>
        <end position="301"/>
    </location>
</feature>
<keyword id="KW-0002">3D-structure</keyword>
<keyword id="KW-0066">ATP synthesis</keyword>
<keyword id="KW-1003">Cell membrane</keyword>
<keyword id="KW-0139">CF(1)</keyword>
<keyword id="KW-0375">Hydrogen ion transport</keyword>
<keyword id="KW-0406">Ion transport</keyword>
<keyword id="KW-0472">Membrane</keyword>
<keyword id="KW-1185">Reference proteome</keyword>
<keyword id="KW-0813">Transport</keyword>
<reference key="1">
    <citation type="journal article" date="1998" name="Nature">
        <title>Deciphering the biology of Mycobacterium tuberculosis from the complete genome sequence.</title>
        <authorList>
            <person name="Cole S.T."/>
            <person name="Brosch R."/>
            <person name="Parkhill J."/>
            <person name="Garnier T."/>
            <person name="Churcher C.M."/>
            <person name="Harris D.E."/>
            <person name="Gordon S.V."/>
            <person name="Eiglmeier K."/>
            <person name="Gas S."/>
            <person name="Barry C.E. III"/>
            <person name="Tekaia F."/>
            <person name="Badcock K."/>
            <person name="Basham D."/>
            <person name="Brown D."/>
            <person name="Chillingworth T."/>
            <person name="Connor R."/>
            <person name="Davies R.M."/>
            <person name="Devlin K."/>
            <person name="Feltwell T."/>
            <person name="Gentles S."/>
            <person name="Hamlin N."/>
            <person name="Holroyd S."/>
            <person name="Hornsby T."/>
            <person name="Jagels K."/>
            <person name="Krogh A."/>
            <person name="McLean J."/>
            <person name="Moule S."/>
            <person name="Murphy L.D."/>
            <person name="Oliver S."/>
            <person name="Osborne J."/>
            <person name="Quail M.A."/>
            <person name="Rajandream M.A."/>
            <person name="Rogers J."/>
            <person name="Rutter S."/>
            <person name="Seeger K."/>
            <person name="Skelton S."/>
            <person name="Squares S."/>
            <person name="Squares R."/>
            <person name="Sulston J.E."/>
            <person name="Taylor K."/>
            <person name="Whitehead S."/>
            <person name="Barrell B.G."/>
        </authorList>
    </citation>
    <scope>NUCLEOTIDE SEQUENCE [LARGE SCALE GENOMIC DNA]</scope>
    <source>
        <strain>ATCC 25618 / H37Rv</strain>
    </source>
</reference>
<reference key="2">
    <citation type="journal article" date="2011" name="Mol. Cell. Proteomics">
        <title>Proteogenomic analysis of Mycobacterium tuberculosis by high resolution mass spectrometry.</title>
        <authorList>
            <person name="Kelkar D.S."/>
            <person name="Kumar D."/>
            <person name="Kumar P."/>
            <person name="Balakrishnan L."/>
            <person name="Muthusamy B."/>
            <person name="Yadav A.K."/>
            <person name="Shrivastava P."/>
            <person name="Marimuthu A."/>
            <person name="Anand S."/>
            <person name="Sundaram H."/>
            <person name="Kingsbury R."/>
            <person name="Harsha H.C."/>
            <person name="Nair B."/>
            <person name="Prasad T.S."/>
            <person name="Chauhan D.S."/>
            <person name="Katoch K."/>
            <person name="Katoch V.M."/>
            <person name="Kumar P."/>
            <person name="Chaerkady R."/>
            <person name="Ramachandran S."/>
            <person name="Dash D."/>
            <person name="Pandey A."/>
        </authorList>
    </citation>
    <scope>IDENTIFICATION BY MASS SPECTROMETRY [LARGE SCALE ANALYSIS]</scope>
    <source>
        <strain>ATCC 25618 / H37Rv</strain>
    </source>
</reference>
<protein>
    <recommendedName>
        <fullName evidence="1">ATP synthase gamma chain</fullName>
    </recommendedName>
    <alternativeName>
        <fullName evidence="1">ATP synthase F1 sector gamma subunit</fullName>
    </alternativeName>
    <alternativeName>
        <fullName evidence="1">F-ATPase gamma subunit</fullName>
    </alternativeName>
</protein>
<sequence length="305" mass="33890">MAATLRELRGRIRSAGSIKKITKAQELIATSRIARAQARLESARPYAFEITRMLTTLAAEAALDHPLLVERPEPKRAGVLVVSSDRGLCGAYNANIFRRSEELFSLLREAGKQPVLYVVGRKAQNYYSFRNWNITESWMGFSEQPTYENAAEIASTLVDAFLLGTDNGEDQRSDSGEGVDELHIVYTEFKSMLSQSAEAHRIAPMVVEYVEEDIGPRTLYSFEPDATMLFESLLPRYLTTRVYAALLESAASELASRQRAMKSATDNADDLIKALTLMANRERQAQITQEISEIVGGANALAEAR</sequence>
<gene>
    <name evidence="1" type="primary">atpG</name>
    <name type="ordered locus">Rv1309</name>
    <name type="ORF">MTCY373.29</name>
</gene>
<proteinExistence type="evidence at protein level"/>
<organism>
    <name type="scientific">Mycobacterium tuberculosis (strain ATCC 25618 / H37Rv)</name>
    <dbReference type="NCBI Taxonomy" id="83332"/>
    <lineage>
        <taxon>Bacteria</taxon>
        <taxon>Bacillati</taxon>
        <taxon>Actinomycetota</taxon>
        <taxon>Actinomycetes</taxon>
        <taxon>Mycobacteriales</taxon>
        <taxon>Mycobacteriaceae</taxon>
        <taxon>Mycobacterium</taxon>
        <taxon>Mycobacterium tuberculosis complex</taxon>
    </lineage>
</organism>
<dbReference type="EMBL" id="AL123456">
    <property type="protein sequence ID" value="CCP44066.1"/>
    <property type="molecule type" value="Genomic_DNA"/>
</dbReference>
<dbReference type="PIR" id="A70775">
    <property type="entry name" value="A70775"/>
</dbReference>
<dbReference type="RefSeq" id="NP_215825.1">
    <property type="nucleotide sequence ID" value="NC_000962.3"/>
</dbReference>
<dbReference type="RefSeq" id="WP_003898819.1">
    <property type="nucleotide sequence ID" value="NZ_NVQJ01000030.1"/>
</dbReference>
<dbReference type="PDB" id="8J0S">
    <property type="method" value="EM"/>
    <property type="resolution" value="2.58 A"/>
    <property type="chains" value="G=1-305"/>
</dbReference>
<dbReference type="PDB" id="8J0T">
    <property type="method" value="EM"/>
    <property type="resolution" value="2.80 A"/>
    <property type="chains" value="G=1-305"/>
</dbReference>
<dbReference type="PDB" id="8JR0">
    <property type="method" value="EM"/>
    <property type="resolution" value="2.80 A"/>
    <property type="chains" value="G=1-305"/>
</dbReference>
<dbReference type="PDBsum" id="8J0S"/>
<dbReference type="PDBsum" id="8J0T"/>
<dbReference type="PDBsum" id="8JR0"/>
<dbReference type="EMDB" id="EMD-35909"/>
<dbReference type="EMDB" id="EMD-35911"/>
<dbReference type="EMDB" id="EMD-36589"/>
<dbReference type="SMR" id="P9WPU9"/>
<dbReference type="FunCoup" id="P9WPU9">
    <property type="interactions" value="481"/>
</dbReference>
<dbReference type="STRING" id="83332.Rv1309"/>
<dbReference type="BindingDB" id="P9WPU9"/>
<dbReference type="ChEMBL" id="CHEMBL2364166"/>
<dbReference type="DrugCentral" id="P9WPU9"/>
<dbReference type="PaxDb" id="83332-Rv1309"/>
<dbReference type="DNASU" id="886929"/>
<dbReference type="GeneID" id="886929"/>
<dbReference type="KEGG" id="mtu:Rv1309"/>
<dbReference type="KEGG" id="mtv:RVBD_1309"/>
<dbReference type="TubercuList" id="Rv1309"/>
<dbReference type="eggNOG" id="COG0224">
    <property type="taxonomic scope" value="Bacteria"/>
</dbReference>
<dbReference type="InParanoid" id="P9WPU9"/>
<dbReference type="OrthoDB" id="9812769at2"/>
<dbReference type="PhylomeDB" id="P9WPU9"/>
<dbReference type="PRO" id="PR:P9WPU9"/>
<dbReference type="Proteomes" id="UP000001584">
    <property type="component" value="Chromosome"/>
</dbReference>
<dbReference type="GO" id="GO:0009274">
    <property type="term" value="C:peptidoglycan-based cell wall"/>
    <property type="evidence" value="ECO:0007005"/>
    <property type="project" value="MTBBASE"/>
</dbReference>
<dbReference type="GO" id="GO:0005886">
    <property type="term" value="C:plasma membrane"/>
    <property type="evidence" value="ECO:0007005"/>
    <property type="project" value="MTBBASE"/>
</dbReference>
<dbReference type="GO" id="GO:0045259">
    <property type="term" value="C:proton-transporting ATP synthase complex"/>
    <property type="evidence" value="ECO:0007669"/>
    <property type="project" value="UniProtKB-KW"/>
</dbReference>
<dbReference type="GO" id="GO:0005524">
    <property type="term" value="F:ATP binding"/>
    <property type="evidence" value="ECO:0007669"/>
    <property type="project" value="UniProtKB-UniRule"/>
</dbReference>
<dbReference type="GO" id="GO:0046933">
    <property type="term" value="F:proton-transporting ATP synthase activity, rotational mechanism"/>
    <property type="evidence" value="ECO:0007669"/>
    <property type="project" value="UniProtKB-UniRule"/>
</dbReference>
<dbReference type="GO" id="GO:0015986">
    <property type="term" value="P:proton motive force-driven ATP synthesis"/>
    <property type="evidence" value="ECO:0000318"/>
    <property type="project" value="GO_Central"/>
</dbReference>
<dbReference type="GO" id="GO:0042777">
    <property type="term" value="P:proton motive force-driven plasma membrane ATP synthesis"/>
    <property type="evidence" value="ECO:0007669"/>
    <property type="project" value="UniProtKB-UniRule"/>
</dbReference>
<dbReference type="CDD" id="cd12151">
    <property type="entry name" value="F1-ATPase_gamma"/>
    <property type="match status" value="1"/>
</dbReference>
<dbReference type="FunFam" id="3.40.1380.10:FF:000010">
    <property type="entry name" value="ATP synthase gamma chain"/>
    <property type="match status" value="1"/>
</dbReference>
<dbReference type="Gene3D" id="3.40.1380.10">
    <property type="match status" value="1"/>
</dbReference>
<dbReference type="Gene3D" id="1.10.287.80">
    <property type="entry name" value="ATP synthase, gamma subunit, helix hairpin domain"/>
    <property type="match status" value="1"/>
</dbReference>
<dbReference type="HAMAP" id="MF_00815">
    <property type="entry name" value="ATP_synth_gamma_bact"/>
    <property type="match status" value="1"/>
</dbReference>
<dbReference type="InterPro" id="IPR035968">
    <property type="entry name" value="ATP_synth_F1_ATPase_gsu"/>
</dbReference>
<dbReference type="InterPro" id="IPR000131">
    <property type="entry name" value="ATP_synth_F1_gsu"/>
</dbReference>
<dbReference type="InterPro" id="IPR023632">
    <property type="entry name" value="ATP_synth_F1_gsu_CS"/>
</dbReference>
<dbReference type="NCBIfam" id="TIGR01146">
    <property type="entry name" value="ATPsyn_F1gamma"/>
    <property type="match status" value="1"/>
</dbReference>
<dbReference type="NCBIfam" id="NF004145">
    <property type="entry name" value="PRK05621.1-2"/>
    <property type="match status" value="1"/>
</dbReference>
<dbReference type="PANTHER" id="PTHR11693">
    <property type="entry name" value="ATP SYNTHASE GAMMA CHAIN"/>
    <property type="match status" value="1"/>
</dbReference>
<dbReference type="PANTHER" id="PTHR11693:SF22">
    <property type="entry name" value="ATP SYNTHASE SUBUNIT GAMMA, MITOCHONDRIAL"/>
    <property type="match status" value="1"/>
</dbReference>
<dbReference type="Pfam" id="PF00231">
    <property type="entry name" value="ATP-synt"/>
    <property type="match status" value="1"/>
</dbReference>
<dbReference type="PRINTS" id="PR00126">
    <property type="entry name" value="ATPASEGAMMA"/>
</dbReference>
<dbReference type="SUPFAM" id="SSF52943">
    <property type="entry name" value="ATP synthase (F1-ATPase), gamma subunit"/>
    <property type="match status" value="1"/>
</dbReference>
<dbReference type="PROSITE" id="PS00153">
    <property type="entry name" value="ATPASE_GAMMA"/>
    <property type="match status" value="1"/>
</dbReference>
<evidence type="ECO:0000255" key="1">
    <source>
        <dbReference type="HAMAP-Rule" id="MF_00815"/>
    </source>
</evidence>
<evidence type="ECO:0007829" key="2">
    <source>
        <dbReference type="PDB" id="8J0S"/>
    </source>
</evidence>